<evidence type="ECO:0000255" key="1">
    <source>
        <dbReference type="HAMAP-Rule" id="MF_00413"/>
    </source>
</evidence>
<sequence length="79" mass="9090">MTDIKIDQTLDTLGLRCPEPVMLTRKTIRNMAEGEVLLIVADDPATTRDISSFCEFMDHQLLNSETENTPYRYWVKKGL</sequence>
<proteinExistence type="inferred from homology"/>
<dbReference type="EMBL" id="CP000569">
    <property type="protein sequence ID" value="ABN73200.1"/>
    <property type="molecule type" value="Genomic_DNA"/>
</dbReference>
<dbReference type="RefSeq" id="WP_011848311.1">
    <property type="nucleotide sequence ID" value="NC_009053.1"/>
</dbReference>
<dbReference type="SMR" id="A3MYG4"/>
<dbReference type="STRING" id="416269.APL_0092"/>
<dbReference type="EnsemblBacteria" id="ABN73200">
    <property type="protein sequence ID" value="ABN73200"/>
    <property type="gene ID" value="APL_0092"/>
</dbReference>
<dbReference type="KEGG" id="apl:APL_0092"/>
<dbReference type="PATRIC" id="fig|416269.6.peg.94"/>
<dbReference type="eggNOG" id="COG0425">
    <property type="taxonomic scope" value="Bacteria"/>
</dbReference>
<dbReference type="HOGENOM" id="CLU_165255_5_1_6"/>
<dbReference type="Proteomes" id="UP000001432">
    <property type="component" value="Chromosome"/>
</dbReference>
<dbReference type="GO" id="GO:0005737">
    <property type="term" value="C:cytoplasm"/>
    <property type="evidence" value="ECO:0007669"/>
    <property type="project" value="UniProtKB-SubCell"/>
</dbReference>
<dbReference type="GO" id="GO:0097163">
    <property type="term" value="F:sulfur carrier activity"/>
    <property type="evidence" value="ECO:0007669"/>
    <property type="project" value="UniProtKB-UniRule"/>
</dbReference>
<dbReference type="GO" id="GO:0002143">
    <property type="term" value="P:tRNA wobble position uridine thiolation"/>
    <property type="evidence" value="ECO:0007669"/>
    <property type="project" value="InterPro"/>
</dbReference>
<dbReference type="CDD" id="cd03423">
    <property type="entry name" value="SirA"/>
    <property type="match status" value="1"/>
</dbReference>
<dbReference type="Gene3D" id="3.30.110.40">
    <property type="entry name" value="TusA-like domain"/>
    <property type="match status" value="1"/>
</dbReference>
<dbReference type="HAMAP" id="MF_00413">
    <property type="entry name" value="Thiourid_synth_A"/>
    <property type="match status" value="1"/>
</dbReference>
<dbReference type="InterPro" id="IPR022931">
    <property type="entry name" value="Sulphur_carrier_TusA"/>
</dbReference>
<dbReference type="InterPro" id="IPR001455">
    <property type="entry name" value="TusA-like"/>
</dbReference>
<dbReference type="InterPro" id="IPR036868">
    <property type="entry name" value="TusA-like_sf"/>
</dbReference>
<dbReference type="NCBIfam" id="NF001423">
    <property type="entry name" value="PRK00299.1"/>
    <property type="match status" value="1"/>
</dbReference>
<dbReference type="PANTHER" id="PTHR33279:SF2">
    <property type="entry name" value="SULFUR CARRIER PROTEIN TUSA"/>
    <property type="match status" value="1"/>
</dbReference>
<dbReference type="PANTHER" id="PTHR33279">
    <property type="entry name" value="SULFUR CARRIER PROTEIN YEDF-RELATED"/>
    <property type="match status" value="1"/>
</dbReference>
<dbReference type="Pfam" id="PF01206">
    <property type="entry name" value="TusA"/>
    <property type="match status" value="1"/>
</dbReference>
<dbReference type="SUPFAM" id="SSF64307">
    <property type="entry name" value="SirA-like"/>
    <property type="match status" value="1"/>
</dbReference>
<dbReference type="PROSITE" id="PS01148">
    <property type="entry name" value="UPF0033"/>
    <property type="match status" value="1"/>
</dbReference>
<feature type="chain" id="PRO_1000050008" description="Sulfur carrier protein TusA">
    <location>
        <begin position="1"/>
        <end position="79"/>
    </location>
</feature>
<feature type="active site" description="Cysteine persulfide intermediate" evidence="1">
    <location>
        <position position="17"/>
    </location>
</feature>
<reference key="1">
    <citation type="journal article" date="2008" name="J. Bacteriol.">
        <title>The complete genome sequence of Actinobacillus pleuropneumoniae L20 (serotype 5b).</title>
        <authorList>
            <person name="Foote S.J."/>
            <person name="Bosse J.T."/>
            <person name="Bouevitch A.B."/>
            <person name="Langford P.R."/>
            <person name="Young N.M."/>
            <person name="Nash J.H.E."/>
        </authorList>
    </citation>
    <scope>NUCLEOTIDE SEQUENCE [LARGE SCALE GENOMIC DNA]</scope>
    <source>
        <strain>L20</strain>
    </source>
</reference>
<protein>
    <recommendedName>
        <fullName evidence="1">Sulfur carrier protein TusA</fullName>
    </recommendedName>
</protein>
<gene>
    <name evidence="1" type="primary">tusA</name>
    <name type="ordered locus">APL_0092</name>
</gene>
<comment type="function">
    <text evidence="1">Sulfur carrier protein which probably makes part of a sulfur-relay system.</text>
</comment>
<comment type="subcellular location">
    <subcellularLocation>
        <location evidence="1">Cytoplasm</location>
    </subcellularLocation>
</comment>
<comment type="similarity">
    <text evidence="1">Belongs to the sulfur carrier protein TusA family.</text>
</comment>
<keyword id="KW-0963">Cytoplasm</keyword>
<keyword id="KW-1185">Reference proteome</keyword>
<name>TUSA_ACTP2</name>
<accession>A3MYG4</accession>
<organism>
    <name type="scientific">Actinobacillus pleuropneumoniae serotype 5b (strain L20)</name>
    <dbReference type="NCBI Taxonomy" id="416269"/>
    <lineage>
        <taxon>Bacteria</taxon>
        <taxon>Pseudomonadati</taxon>
        <taxon>Pseudomonadota</taxon>
        <taxon>Gammaproteobacteria</taxon>
        <taxon>Pasteurellales</taxon>
        <taxon>Pasteurellaceae</taxon>
        <taxon>Actinobacillus</taxon>
    </lineage>
</organism>